<organism>
    <name type="scientific">Rattus norvegicus</name>
    <name type="common">Rat</name>
    <dbReference type="NCBI Taxonomy" id="10116"/>
    <lineage>
        <taxon>Eukaryota</taxon>
        <taxon>Metazoa</taxon>
        <taxon>Chordata</taxon>
        <taxon>Craniata</taxon>
        <taxon>Vertebrata</taxon>
        <taxon>Euteleostomi</taxon>
        <taxon>Mammalia</taxon>
        <taxon>Eutheria</taxon>
        <taxon>Euarchontoglires</taxon>
        <taxon>Glires</taxon>
        <taxon>Rodentia</taxon>
        <taxon>Myomorpha</taxon>
        <taxon>Muroidea</taxon>
        <taxon>Muridae</taxon>
        <taxon>Murinae</taxon>
        <taxon>Rattus</taxon>
    </lineage>
</organism>
<comment type="function">
    <text evidence="1">Essential for ribosome biogenesis.</text>
</comment>
<comment type="similarity">
    <text evidence="6">Belongs to the LTV1 family.</text>
</comment>
<gene>
    <name type="primary">Ltv1</name>
</gene>
<accession>Q68FR7</accession>
<reference key="1">
    <citation type="journal article" date="2004" name="Genome Res.">
        <title>The status, quality, and expansion of the NIH full-length cDNA project: the Mammalian Gene Collection (MGC).</title>
        <authorList>
            <consortium name="The MGC Project Team"/>
        </authorList>
    </citation>
    <scope>NUCLEOTIDE SEQUENCE [LARGE SCALE MRNA]</scope>
    <source>
        <tissue>Testis</tissue>
    </source>
</reference>
<evidence type="ECO:0000250" key="1">
    <source>
        <dbReference type="UniProtKB" id="Q5U3J8"/>
    </source>
</evidence>
<evidence type="ECO:0000250" key="2">
    <source>
        <dbReference type="UniProtKB" id="Q6NSQ7"/>
    </source>
</evidence>
<evidence type="ECO:0000250" key="3">
    <source>
        <dbReference type="UniProtKB" id="Q96GA3"/>
    </source>
</evidence>
<evidence type="ECO:0000255" key="4"/>
<evidence type="ECO:0000256" key="5">
    <source>
        <dbReference type="SAM" id="MobiDB-lite"/>
    </source>
</evidence>
<evidence type="ECO:0000305" key="6"/>
<feature type="chain" id="PRO_0000302816" description="Protein LTV1 homolog">
    <location>
        <begin position="1"/>
        <end position="470"/>
    </location>
</feature>
<feature type="region of interest" description="Disordered" evidence="5">
    <location>
        <begin position="23"/>
        <end position="54"/>
    </location>
</feature>
<feature type="region of interest" description="Disordered" evidence="5">
    <location>
        <begin position="75"/>
        <end position="103"/>
    </location>
</feature>
<feature type="region of interest" description="Disordered" evidence="5">
    <location>
        <begin position="166"/>
        <end position="209"/>
    </location>
</feature>
<feature type="region of interest" description="Disordered" evidence="5">
    <location>
        <begin position="399"/>
        <end position="437"/>
    </location>
</feature>
<feature type="coiled-coil region" evidence="4">
    <location>
        <begin position="414"/>
        <end position="470"/>
    </location>
</feature>
<feature type="compositionally biased region" description="Polar residues" evidence="5">
    <location>
        <begin position="83"/>
        <end position="92"/>
    </location>
</feature>
<feature type="compositionally biased region" description="Acidic residues" evidence="5">
    <location>
        <begin position="176"/>
        <end position="195"/>
    </location>
</feature>
<feature type="compositionally biased region" description="Polar residues" evidence="5">
    <location>
        <begin position="399"/>
        <end position="413"/>
    </location>
</feature>
<feature type="compositionally biased region" description="Basic and acidic residues" evidence="5">
    <location>
        <begin position="414"/>
        <end position="437"/>
    </location>
</feature>
<feature type="modified residue" description="Phosphoserine" evidence="3">
    <location>
        <position position="17"/>
    </location>
</feature>
<feature type="modified residue" description="Phosphoserine" evidence="3">
    <location>
        <position position="24"/>
    </location>
</feature>
<feature type="modified residue" description="Phosphoserine" evidence="2">
    <location>
        <position position="243"/>
    </location>
</feature>
<feature type="modified residue" description="Phosphoserine" evidence="3">
    <location>
        <position position="326"/>
    </location>
</feature>
<feature type="modified residue" description="Phosphoserine" evidence="3">
    <location>
        <position position="403"/>
    </location>
</feature>
<proteinExistence type="evidence at transcript level"/>
<sequence length="470" mass="53562">MPHRKKKPFIEKKKAVSFHLVHRSQRDPLAADETAPQRVLVPTQKVNDEERRAEQRKYGVFFDDDYDYLQHLREPSGPAELIPSSTPSTYSSRGEEDTSVFPSTGIKLPSSVFASEFEEDVGLLNKAAPVSGPRLDFDPDIVAALDDDFDFDDPENLLEDDFILQASKPTGGEGMDMLESDGDDGNEWEDMDEGGSDGCGSTGPLSDGGDISAPGSPREAMKKHLFWEEETKSRFTEYSMTSSVMRRNEQLTLHDERFEKFYEQYDDVEIGALDNAELEGTIQVDSSRLQEVLNDYYKEKAENCVKLNTLEPFEDQDLAANELDESEKEETVTVVLEEAREKWDCESICSTYSNLYNHPQLIKYEPKPKQIHLSSKTGIPLHVLPKKGLTAKQVERMQMINSSDLPKVSTQPRLKTESKEDKKARKQAIKEERKERRVEKKANKLAFKLEKRRQEKELLNLKKNVEGLKL</sequence>
<dbReference type="EMBL" id="BC079397">
    <property type="protein sequence ID" value="AAH79397.1"/>
    <property type="molecule type" value="mRNA"/>
</dbReference>
<dbReference type="RefSeq" id="NP_001014179.1">
    <property type="nucleotide sequence ID" value="NM_001014157.1"/>
</dbReference>
<dbReference type="SMR" id="Q68FR7"/>
<dbReference type="BioGRID" id="262691">
    <property type="interactions" value="1"/>
</dbReference>
<dbReference type="FunCoup" id="Q68FR7">
    <property type="interactions" value="2339"/>
</dbReference>
<dbReference type="STRING" id="10116.ENSRNOP00000020453"/>
<dbReference type="PhosphoSitePlus" id="Q68FR7"/>
<dbReference type="jPOST" id="Q68FR7"/>
<dbReference type="PaxDb" id="10116-ENSRNOP00000020453"/>
<dbReference type="Ensembl" id="ENSRNOT00000020453.7">
    <property type="protein sequence ID" value="ENSRNOP00000020453.4"/>
    <property type="gene ID" value="ENSRNOG00000015217.7"/>
</dbReference>
<dbReference type="GeneID" id="361452"/>
<dbReference type="KEGG" id="rno:361452"/>
<dbReference type="UCSC" id="RGD:1311264">
    <property type="organism name" value="rat"/>
</dbReference>
<dbReference type="AGR" id="RGD:1311264"/>
<dbReference type="CTD" id="84946"/>
<dbReference type="RGD" id="1311264">
    <property type="gene designation" value="Ltv1"/>
</dbReference>
<dbReference type="eggNOG" id="KOG2637">
    <property type="taxonomic scope" value="Eukaryota"/>
</dbReference>
<dbReference type="GeneTree" id="ENSGT00390000002789"/>
<dbReference type="HOGENOM" id="CLU_035718_0_0_1"/>
<dbReference type="InParanoid" id="Q68FR7"/>
<dbReference type="OrthoDB" id="80418at9989"/>
<dbReference type="PhylomeDB" id="Q68FR7"/>
<dbReference type="TreeFam" id="TF314845"/>
<dbReference type="Reactome" id="R-RNO-6791226">
    <property type="pathway name" value="Major pathway of rRNA processing in the nucleolus and cytosol"/>
</dbReference>
<dbReference type="PRO" id="PR:Q68FR7"/>
<dbReference type="Proteomes" id="UP000002494">
    <property type="component" value="Chromosome 1"/>
</dbReference>
<dbReference type="Bgee" id="ENSRNOG00000015217">
    <property type="expression patterns" value="Expressed in esophagus and 20 other cell types or tissues"/>
</dbReference>
<dbReference type="GO" id="GO:0005829">
    <property type="term" value="C:cytosol"/>
    <property type="evidence" value="ECO:0000318"/>
    <property type="project" value="GO_Central"/>
</dbReference>
<dbReference type="GO" id="GO:0005654">
    <property type="term" value="C:nucleoplasm"/>
    <property type="evidence" value="ECO:0007669"/>
    <property type="project" value="Ensembl"/>
</dbReference>
<dbReference type="GO" id="GO:0005634">
    <property type="term" value="C:nucleus"/>
    <property type="evidence" value="ECO:0000318"/>
    <property type="project" value="GO_Central"/>
</dbReference>
<dbReference type="GO" id="GO:0030688">
    <property type="term" value="C:preribosome, small subunit precursor"/>
    <property type="evidence" value="ECO:0000318"/>
    <property type="project" value="GO_Central"/>
</dbReference>
<dbReference type="GO" id="GO:0042274">
    <property type="term" value="P:ribosomal small subunit biogenesis"/>
    <property type="evidence" value="ECO:0000318"/>
    <property type="project" value="GO_Central"/>
</dbReference>
<dbReference type="GO" id="GO:0000056">
    <property type="term" value="P:ribosomal small subunit export from nucleus"/>
    <property type="evidence" value="ECO:0000318"/>
    <property type="project" value="GO_Central"/>
</dbReference>
<dbReference type="GO" id="GO:0042254">
    <property type="term" value="P:ribosome biogenesis"/>
    <property type="evidence" value="ECO:0000250"/>
    <property type="project" value="UniProtKB"/>
</dbReference>
<dbReference type="InterPro" id="IPR007307">
    <property type="entry name" value="Ltv1"/>
</dbReference>
<dbReference type="PANTHER" id="PTHR21531">
    <property type="entry name" value="LOW-TEMPERATURE VIABILITY PROTEIN LTV1-RELATED"/>
    <property type="match status" value="1"/>
</dbReference>
<dbReference type="PANTHER" id="PTHR21531:SF0">
    <property type="entry name" value="PROTEIN LTV1 HOMOLOG"/>
    <property type="match status" value="1"/>
</dbReference>
<dbReference type="Pfam" id="PF04180">
    <property type="entry name" value="LTV"/>
    <property type="match status" value="2"/>
</dbReference>
<keyword id="KW-0175">Coiled coil</keyword>
<keyword id="KW-0597">Phosphoprotein</keyword>
<keyword id="KW-1185">Reference proteome</keyword>
<keyword id="KW-0690">Ribosome biogenesis</keyword>
<protein>
    <recommendedName>
        <fullName>Protein LTV1 homolog</fullName>
    </recommendedName>
</protein>
<name>LTV1_RAT</name>